<proteinExistence type="inferred from homology"/>
<sequence>MKTSPHRNTSAIVDLKAIRNNIEKFKKHINPNAEIWPAVKADAYGHGSVEVSKAVSDLVGGFCVSNLDEAIELRNHLVTKPILVLSGIVPEDVDIAAALNISLTAPSLEWLKLVVQEEAELSDLKIHIGVDSGMGRIGIRDVEEANQMIELADKYAINFEGIFTHFATADMADETKFKNQQARFNKIMAGLSRQPKFIHSTNTAAALWHKEQVQAIERLGISMYGLNPSGKTLELPFEIEPALSLVSELTHIKKIAAGETVGYGATYETSEETWIGTVPIGYADGWTRQMQGFKVLVDGKFCEIVGRVCMDQMMIKLDKSYPLGTKVTLIGRDKANEITTTDVADWRGTINYEVLCLLSDRIKRIYK</sequence>
<gene>
    <name type="primary">alr</name>
    <name type="ordered locus">LACR_0910</name>
</gene>
<organism>
    <name type="scientific">Lactococcus lactis subsp. cremoris (strain SK11)</name>
    <dbReference type="NCBI Taxonomy" id="272622"/>
    <lineage>
        <taxon>Bacteria</taxon>
        <taxon>Bacillati</taxon>
        <taxon>Bacillota</taxon>
        <taxon>Bacilli</taxon>
        <taxon>Lactobacillales</taxon>
        <taxon>Streptococcaceae</taxon>
        <taxon>Lactococcus</taxon>
        <taxon>Lactococcus cremoris subsp. cremoris</taxon>
    </lineage>
</organism>
<keyword id="KW-0413">Isomerase</keyword>
<keyword id="KW-0663">Pyridoxal phosphate</keyword>
<name>ALR_LACLS</name>
<reference key="1">
    <citation type="journal article" date="2006" name="Proc. Natl. Acad. Sci. U.S.A.">
        <title>Comparative genomics of the lactic acid bacteria.</title>
        <authorList>
            <person name="Makarova K.S."/>
            <person name="Slesarev A."/>
            <person name="Wolf Y.I."/>
            <person name="Sorokin A."/>
            <person name="Mirkin B."/>
            <person name="Koonin E.V."/>
            <person name="Pavlov A."/>
            <person name="Pavlova N."/>
            <person name="Karamychev V."/>
            <person name="Polouchine N."/>
            <person name="Shakhova V."/>
            <person name="Grigoriev I."/>
            <person name="Lou Y."/>
            <person name="Rohksar D."/>
            <person name="Lucas S."/>
            <person name="Huang K."/>
            <person name="Goodstein D.M."/>
            <person name="Hawkins T."/>
            <person name="Plengvidhya V."/>
            <person name="Welker D."/>
            <person name="Hughes J."/>
            <person name="Goh Y."/>
            <person name="Benson A."/>
            <person name="Baldwin K."/>
            <person name="Lee J.-H."/>
            <person name="Diaz-Muniz I."/>
            <person name="Dosti B."/>
            <person name="Smeianov V."/>
            <person name="Wechter W."/>
            <person name="Barabote R."/>
            <person name="Lorca G."/>
            <person name="Altermann E."/>
            <person name="Barrangou R."/>
            <person name="Ganesan B."/>
            <person name="Xie Y."/>
            <person name="Rawsthorne H."/>
            <person name="Tamir D."/>
            <person name="Parker C."/>
            <person name="Breidt F."/>
            <person name="Broadbent J.R."/>
            <person name="Hutkins R."/>
            <person name="O'Sullivan D."/>
            <person name="Steele J."/>
            <person name="Unlu G."/>
            <person name="Saier M.H. Jr."/>
            <person name="Klaenhammer T."/>
            <person name="Richardson P."/>
            <person name="Kozyavkin S."/>
            <person name="Weimer B.C."/>
            <person name="Mills D.A."/>
        </authorList>
    </citation>
    <scope>NUCLEOTIDE SEQUENCE [LARGE SCALE GENOMIC DNA]</scope>
    <source>
        <strain>SK11</strain>
    </source>
</reference>
<evidence type="ECO:0000255" key="1">
    <source>
        <dbReference type="HAMAP-Rule" id="MF_01201"/>
    </source>
</evidence>
<accession>Q030B4</accession>
<comment type="function">
    <text evidence="1">Catalyzes the interconversion of L-alanine and D-alanine. May also act on other amino acids.</text>
</comment>
<comment type="catalytic activity">
    <reaction evidence="1">
        <text>L-alanine = D-alanine</text>
        <dbReference type="Rhea" id="RHEA:20249"/>
        <dbReference type="ChEBI" id="CHEBI:57416"/>
        <dbReference type="ChEBI" id="CHEBI:57972"/>
        <dbReference type="EC" id="5.1.1.1"/>
    </reaction>
</comment>
<comment type="cofactor">
    <cofactor evidence="1">
        <name>pyridoxal 5'-phosphate</name>
        <dbReference type="ChEBI" id="CHEBI:597326"/>
    </cofactor>
</comment>
<comment type="pathway">
    <text evidence="1">Amino-acid biosynthesis; D-alanine biosynthesis; D-alanine from L-alanine: step 1/1.</text>
</comment>
<comment type="similarity">
    <text evidence="1">Belongs to the alanine racemase family.</text>
</comment>
<protein>
    <recommendedName>
        <fullName evidence="1">Alanine racemase</fullName>
        <ecNumber evidence="1">5.1.1.1</ecNumber>
    </recommendedName>
</protein>
<feature type="chain" id="PRO_1000066001" description="Alanine racemase">
    <location>
        <begin position="1"/>
        <end position="367"/>
    </location>
</feature>
<feature type="active site" description="Proton acceptor; specific for D-alanine" evidence="1">
    <location>
        <position position="40"/>
    </location>
</feature>
<feature type="active site" description="Proton acceptor; specific for L-alanine" evidence="1">
    <location>
        <position position="263"/>
    </location>
</feature>
<feature type="binding site" evidence="1">
    <location>
        <position position="136"/>
    </location>
    <ligand>
        <name>substrate</name>
    </ligand>
</feature>
<feature type="binding site" evidence="1">
    <location>
        <position position="310"/>
    </location>
    <ligand>
        <name>substrate</name>
    </ligand>
</feature>
<feature type="modified residue" description="N6-(pyridoxal phosphate)lysine" evidence="1">
    <location>
        <position position="40"/>
    </location>
</feature>
<dbReference type="EC" id="5.1.1.1" evidence="1"/>
<dbReference type="EMBL" id="CP000425">
    <property type="protein sequence ID" value="ABJ72458.1"/>
    <property type="molecule type" value="Genomic_DNA"/>
</dbReference>
<dbReference type="RefSeq" id="WP_011675804.1">
    <property type="nucleotide sequence ID" value="NC_008527.1"/>
</dbReference>
<dbReference type="SMR" id="Q030B4"/>
<dbReference type="KEGG" id="llc:LACR_0910"/>
<dbReference type="HOGENOM" id="CLU_028393_2_1_9"/>
<dbReference type="UniPathway" id="UPA00042">
    <property type="reaction ID" value="UER00497"/>
</dbReference>
<dbReference type="Proteomes" id="UP000000240">
    <property type="component" value="Chromosome"/>
</dbReference>
<dbReference type="GO" id="GO:0005829">
    <property type="term" value="C:cytosol"/>
    <property type="evidence" value="ECO:0007669"/>
    <property type="project" value="TreeGrafter"/>
</dbReference>
<dbReference type="GO" id="GO:0008784">
    <property type="term" value="F:alanine racemase activity"/>
    <property type="evidence" value="ECO:0007669"/>
    <property type="project" value="UniProtKB-UniRule"/>
</dbReference>
<dbReference type="GO" id="GO:0030170">
    <property type="term" value="F:pyridoxal phosphate binding"/>
    <property type="evidence" value="ECO:0007669"/>
    <property type="project" value="UniProtKB-UniRule"/>
</dbReference>
<dbReference type="GO" id="GO:0030632">
    <property type="term" value="P:D-alanine biosynthetic process"/>
    <property type="evidence" value="ECO:0007669"/>
    <property type="project" value="UniProtKB-UniRule"/>
</dbReference>
<dbReference type="GO" id="GO:0009252">
    <property type="term" value="P:peptidoglycan biosynthetic process"/>
    <property type="evidence" value="ECO:0007669"/>
    <property type="project" value="TreeGrafter"/>
</dbReference>
<dbReference type="CDD" id="cd00430">
    <property type="entry name" value="PLPDE_III_AR"/>
    <property type="match status" value="1"/>
</dbReference>
<dbReference type="FunFam" id="2.40.37.10:FF:000006">
    <property type="entry name" value="Alanine racemase"/>
    <property type="match status" value="1"/>
</dbReference>
<dbReference type="FunFam" id="3.20.20.10:FF:000002">
    <property type="entry name" value="Alanine racemase"/>
    <property type="match status" value="1"/>
</dbReference>
<dbReference type="Gene3D" id="3.20.20.10">
    <property type="entry name" value="Alanine racemase"/>
    <property type="match status" value="1"/>
</dbReference>
<dbReference type="Gene3D" id="2.40.37.10">
    <property type="entry name" value="Lyase, Ornithine Decarboxylase, Chain A, domain 1"/>
    <property type="match status" value="1"/>
</dbReference>
<dbReference type="HAMAP" id="MF_01201">
    <property type="entry name" value="Ala_racemase"/>
    <property type="match status" value="1"/>
</dbReference>
<dbReference type="InterPro" id="IPR000821">
    <property type="entry name" value="Ala_racemase"/>
</dbReference>
<dbReference type="InterPro" id="IPR009006">
    <property type="entry name" value="Ala_racemase/Decarboxylase_C"/>
</dbReference>
<dbReference type="InterPro" id="IPR011079">
    <property type="entry name" value="Ala_racemase_C"/>
</dbReference>
<dbReference type="InterPro" id="IPR001608">
    <property type="entry name" value="Ala_racemase_N"/>
</dbReference>
<dbReference type="InterPro" id="IPR020622">
    <property type="entry name" value="Ala_racemase_pyridoxalP-BS"/>
</dbReference>
<dbReference type="InterPro" id="IPR029066">
    <property type="entry name" value="PLP-binding_barrel"/>
</dbReference>
<dbReference type="NCBIfam" id="TIGR00492">
    <property type="entry name" value="alr"/>
    <property type="match status" value="1"/>
</dbReference>
<dbReference type="PANTHER" id="PTHR30511">
    <property type="entry name" value="ALANINE RACEMASE"/>
    <property type="match status" value="1"/>
</dbReference>
<dbReference type="PANTHER" id="PTHR30511:SF0">
    <property type="entry name" value="ALANINE RACEMASE, CATABOLIC-RELATED"/>
    <property type="match status" value="1"/>
</dbReference>
<dbReference type="Pfam" id="PF00842">
    <property type="entry name" value="Ala_racemase_C"/>
    <property type="match status" value="1"/>
</dbReference>
<dbReference type="Pfam" id="PF01168">
    <property type="entry name" value="Ala_racemase_N"/>
    <property type="match status" value="1"/>
</dbReference>
<dbReference type="PRINTS" id="PR00992">
    <property type="entry name" value="ALARACEMASE"/>
</dbReference>
<dbReference type="SMART" id="SM01005">
    <property type="entry name" value="Ala_racemase_C"/>
    <property type="match status" value="1"/>
</dbReference>
<dbReference type="SUPFAM" id="SSF50621">
    <property type="entry name" value="Alanine racemase C-terminal domain-like"/>
    <property type="match status" value="1"/>
</dbReference>
<dbReference type="SUPFAM" id="SSF51419">
    <property type="entry name" value="PLP-binding barrel"/>
    <property type="match status" value="1"/>
</dbReference>
<dbReference type="PROSITE" id="PS00395">
    <property type="entry name" value="ALANINE_RACEMASE"/>
    <property type="match status" value="1"/>
</dbReference>